<proteinExistence type="evidence at protein level"/>
<evidence type="ECO:0000250" key="1">
    <source>
        <dbReference type="UniProtKB" id="P49189"/>
    </source>
</evidence>
<evidence type="ECO:0000250" key="2">
    <source>
        <dbReference type="UniProtKB" id="P56533"/>
    </source>
</evidence>
<evidence type="ECO:0000250" key="3">
    <source>
        <dbReference type="UniProtKB" id="Q9JLJ3"/>
    </source>
</evidence>
<evidence type="ECO:0000255" key="4">
    <source>
        <dbReference type="PROSITE-ProRule" id="PRU10007"/>
    </source>
</evidence>
<evidence type="ECO:0000255" key="5">
    <source>
        <dbReference type="PROSITE-ProRule" id="PRU10008"/>
    </source>
</evidence>
<evidence type="ECO:0000305" key="6"/>
<evidence type="ECO:0000312" key="7">
    <source>
        <dbReference type="EMBL" id="BAE28979.1"/>
    </source>
</evidence>
<evidence type="ECO:0000312" key="8">
    <source>
        <dbReference type="EMBL" id="BAE32922.1"/>
    </source>
</evidence>
<evidence type="ECO:0000312" key="9">
    <source>
        <dbReference type="EMBL" id="BAE36870.1"/>
    </source>
</evidence>
<evidence type="ECO:0000312" key="10">
    <source>
        <dbReference type="MGI" id="MGI:1861622"/>
    </source>
</evidence>
<evidence type="ECO:0000312" key="11">
    <source>
        <dbReference type="Proteomes" id="UP000000589"/>
    </source>
</evidence>
<evidence type="ECO:0007744" key="12">
    <source>
    </source>
</evidence>
<evidence type="ECO:0007744" key="13">
    <source>
    </source>
</evidence>
<feature type="initiator methionine" description="Removed" evidence="1">
    <location>
        <position position="1"/>
    </location>
</feature>
<feature type="chain" id="PRO_0000056486" description="4-trimethylaminobutyraldehyde dehydrogenase">
    <location>
        <begin position="2"/>
        <end position="494"/>
    </location>
</feature>
<feature type="active site" description="Proton acceptor" evidence="4">
    <location>
        <position position="254"/>
    </location>
</feature>
<feature type="active site" description="Nucleophile" evidence="5">
    <location>
        <position position="288"/>
    </location>
</feature>
<feature type="binding site" evidence="2">
    <location>
        <position position="180"/>
    </location>
    <ligand>
        <name>NAD(+)</name>
        <dbReference type="ChEBI" id="CHEBI:57540"/>
    </ligand>
</feature>
<feature type="binding site" evidence="2">
    <location>
        <begin position="232"/>
        <end position="236"/>
    </location>
    <ligand>
        <name>NAD(+)</name>
        <dbReference type="ChEBI" id="CHEBI:57540"/>
    </ligand>
</feature>
<feature type="binding site" evidence="2">
    <location>
        <position position="391"/>
    </location>
    <ligand>
        <name>NAD(+)</name>
        <dbReference type="ChEBI" id="CHEBI:57540"/>
    </ligand>
</feature>
<feature type="modified residue" description="N-acetylserine" evidence="1">
    <location>
        <position position="2"/>
    </location>
</feature>
<feature type="modified residue" description="N6-acetyllysine; alternate" evidence="12">
    <location>
        <position position="30"/>
    </location>
</feature>
<feature type="modified residue" description="N6-succinyllysine; alternate" evidence="13">
    <location>
        <position position="30"/>
    </location>
</feature>
<feature type="modified residue" description="N6-succinyllysine" evidence="13">
    <location>
        <position position="59"/>
    </location>
</feature>
<feature type="modified residue" description="N6-acetyllysine" evidence="12">
    <location>
        <position position="298"/>
    </location>
</feature>
<feature type="modified residue" description="N6-acetyllysine; alternate" evidence="12">
    <location>
        <position position="303"/>
    </location>
</feature>
<feature type="modified residue" description="N6-succinyllysine; alternate" evidence="13">
    <location>
        <position position="303"/>
    </location>
</feature>
<feature type="modified residue" description="N6-acetyllysine" evidence="12">
    <location>
        <position position="344"/>
    </location>
</feature>
<feature type="splice variant" id="VSP_061582" description="In isoform 2." evidence="6">
    <original>M</original>
    <variation>MILGAVGSVLTSLLRIHRAAAVAAM</variation>
    <location>
        <position position="1"/>
    </location>
</feature>
<name>AL9A1_MOUSE</name>
<organism>
    <name type="scientific">Mus musculus</name>
    <name type="common">Mouse</name>
    <dbReference type="NCBI Taxonomy" id="10090"/>
    <lineage>
        <taxon>Eukaryota</taxon>
        <taxon>Metazoa</taxon>
        <taxon>Chordata</taxon>
        <taxon>Craniata</taxon>
        <taxon>Vertebrata</taxon>
        <taxon>Euteleostomi</taxon>
        <taxon>Mammalia</taxon>
        <taxon>Eutheria</taxon>
        <taxon>Euarchontoglires</taxon>
        <taxon>Glires</taxon>
        <taxon>Rodentia</taxon>
        <taxon>Myomorpha</taxon>
        <taxon>Muroidea</taxon>
        <taxon>Muridae</taxon>
        <taxon>Murinae</taxon>
        <taxon>Mus</taxon>
        <taxon>Mus</taxon>
    </lineage>
</organism>
<gene>
    <name evidence="10" type="primary">Aldh9a1</name>
</gene>
<protein>
    <recommendedName>
        <fullName>4-trimethylaminobutyraldehyde dehydrogenase</fullName>
        <shortName>TMABA-DH</shortName>
        <shortName>TMABADH</shortName>
        <ecNumber evidence="1">1.2.1.47</ecNumber>
    </recommendedName>
    <alternativeName>
        <fullName>Aldehyde dehydrogenase family 9 member A1</fullName>
        <ecNumber evidence="1">1.2.1.3</ecNumber>
    </alternativeName>
    <alternativeName>
        <fullName>Formaldehyde dehydrogenase</fullName>
        <ecNumber evidence="1">1.2.1.46</ecNumber>
    </alternativeName>
    <alternativeName>
        <fullName>Gamma-aminobutyraldehyde dehydrogenase</fullName>
        <ecNumber evidence="1">1.2.1.19</ecNumber>
    </alternativeName>
</protein>
<comment type="function">
    <text evidence="1">Converts gamma-trimethylaminobutyraldehyde into gamma-butyrobetaine with high efficiency (in vitro). Can catalyze the irreversible oxidation of a broad range of aldehydes to the corresponding acids in an NAD-dependent reaction, but with low efficiency. Catalyzes the oxidation of aldehydes arising from biogenic amines and polyamines.</text>
</comment>
<comment type="catalytic activity">
    <reaction evidence="1">
        <text>4-(trimethylamino)butanal + NAD(+) + H2O = 4-(trimethylamino)butanoate + NADH + 2 H(+)</text>
        <dbReference type="Rhea" id="RHEA:17985"/>
        <dbReference type="ChEBI" id="CHEBI:15377"/>
        <dbReference type="ChEBI" id="CHEBI:15378"/>
        <dbReference type="ChEBI" id="CHEBI:16244"/>
        <dbReference type="ChEBI" id="CHEBI:18020"/>
        <dbReference type="ChEBI" id="CHEBI:57540"/>
        <dbReference type="ChEBI" id="CHEBI:57945"/>
        <dbReference type="EC" id="1.2.1.47"/>
    </reaction>
</comment>
<comment type="catalytic activity">
    <reaction evidence="1">
        <text>an aldehyde + NAD(+) + H2O = a carboxylate + NADH + 2 H(+)</text>
        <dbReference type="Rhea" id="RHEA:16185"/>
        <dbReference type="ChEBI" id="CHEBI:15377"/>
        <dbReference type="ChEBI" id="CHEBI:15378"/>
        <dbReference type="ChEBI" id="CHEBI:17478"/>
        <dbReference type="ChEBI" id="CHEBI:29067"/>
        <dbReference type="ChEBI" id="CHEBI:57540"/>
        <dbReference type="ChEBI" id="CHEBI:57945"/>
        <dbReference type="EC" id="1.2.1.3"/>
    </reaction>
</comment>
<comment type="catalytic activity">
    <reaction evidence="1">
        <text>4-aminobutanal + NAD(+) + H2O = 4-aminobutanoate + NADH + 2 H(+)</text>
        <dbReference type="Rhea" id="RHEA:19105"/>
        <dbReference type="ChEBI" id="CHEBI:15377"/>
        <dbReference type="ChEBI" id="CHEBI:15378"/>
        <dbReference type="ChEBI" id="CHEBI:57540"/>
        <dbReference type="ChEBI" id="CHEBI:57945"/>
        <dbReference type="ChEBI" id="CHEBI:58264"/>
        <dbReference type="ChEBI" id="CHEBI:59888"/>
        <dbReference type="EC" id="1.2.1.19"/>
    </reaction>
</comment>
<comment type="catalytic activity">
    <reaction evidence="1">
        <text>formaldehyde + NAD(+) + H2O = formate + NADH + 2 H(+)</text>
        <dbReference type="Rhea" id="RHEA:16425"/>
        <dbReference type="ChEBI" id="CHEBI:15377"/>
        <dbReference type="ChEBI" id="CHEBI:15378"/>
        <dbReference type="ChEBI" id="CHEBI:15740"/>
        <dbReference type="ChEBI" id="CHEBI:16842"/>
        <dbReference type="ChEBI" id="CHEBI:57540"/>
        <dbReference type="ChEBI" id="CHEBI:57945"/>
        <dbReference type="EC" id="1.2.1.46"/>
    </reaction>
</comment>
<comment type="catalytic activity">
    <reaction evidence="1">
        <text>acetaldehyde + NAD(+) + H2O = acetate + NADH + 2 H(+)</text>
        <dbReference type="Rhea" id="RHEA:25294"/>
        <dbReference type="ChEBI" id="CHEBI:15343"/>
        <dbReference type="ChEBI" id="CHEBI:15377"/>
        <dbReference type="ChEBI" id="CHEBI:15378"/>
        <dbReference type="ChEBI" id="CHEBI:30089"/>
        <dbReference type="ChEBI" id="CHEBI:57540"/>
        <dbReference type="ChEBI" id="CHEBI:57945"/>
        <dbReference type="EC" id="1.2.1.3"/>
    </reaction>
</comment>
<comment type="catalytic activity">
    <reaction evidence="1">
        <text>imidazole-4-acetaldehyde + NAD(+) + H2O = imidazole-4-acetate + NADH + 2 H(+)</text>
        <dbReference type="Rhea" id="RHEA:31059"/>
        <dbReference type="ChEBI" id="CHEBI:15377"/>
        <dbReference type="ChEBI" id="CHEBI:15378"/>
        <dbReference type="ChEBI" id="CHEBI:27398"/>
        <dbReference type="ChEBI" id="CHEBI:57540"/>
        <dbReference type="ChEBI" id="CHEBI:57945"/>
        <dbReference type="ChEBI" id="CHEBI:57969"/>
    </reaction>
</comment>
<comment type="catalytic activity">
    <reaction evidence="1">
        <text>acrolein + NAD(+) + H2O = acrylate + NADH + 2 H(+)</text>
        <dbReference type="Rhea" id="RHEA:69084"/>
        <dbReference type="ChEBI" id="CHEBI:15368"/>
        <dbReference type="ChEBI" id="CHEBI:15377"/>
        <dbReference type="ChEBI" id="CHEBI:15378"/>
        <dbReference type="ChEBI" id="CHEBI:37080"/>
        <dbReference type="ChEBI" id="CHEBI:57540"/>
        <dbReference type="ChEBI" id="CHEBI:57945"/>
    </reaction>
</comment>
<comment type="catalytic activity">
    <reaction evidence="1">
        <text>(5-hydroxyindol-3-yl)acetaldehyde + NAD(+) + H2O = (5-hydroxyindol-3-yl)acetate + NADH + 2 H(+)</text>
        <dbReference type="Rhea" id="RHEA:31215"/>
        <dbReference type="ChEBI" id="CHEBI:15377"/>
        <dbReference type="ChEBI" id="CHEBI:15378"/>
        <dbReference type="ChEBI" id="CHEBI:50157"/>
        <dbReference type="ChEBI" id="CHEBI:57540"/>
        <dbReference type="ChEBI" id="CHEBI:57945"/>
        <dbReference type="ChEBI" id="CHEBI:62622"/>
    </reaction>
</comment>
<comment type="catalytic activity">
    <reaction evidence="1">
        <text>3,4-dihydroxyphenylacetaldehyde + NAD(+) + H2O = 3,4-dihydroxyphenylacetate + NADH + 2 H(+)</text>
        <dbReference type="Rhea" id="RHEA:69080"/>
        <dbReference type="ChEBI" id="CHEBI:15377"/>
        <dbReference type="ChEBI" id="CHEBI:15378"/>
        <dbReference type="ChEBI" id="CHEBI:17612"/>
        <dbReference type="ChEBI" id="CHEBI:27978"/>
        <dbReference type="ChEBI" id="CHEBI:57540"/>
        <dbReference type="ChEBI" id="CHEBI:57945"/>
    </reaction>
</comment>
<comment type="catalytic activity">
    <reaction evidence="1">
        <text>spermine monoaldehyde + NAD(+) + H2O = N-(2-carboxyethyl)spermidine + NADH + 2 H(+)</text>
        <dbReference type="Rhea" id="RHEA:69168"/>
        <dbReference type="ChEBI" id="CHEBI:15377"/>
        <dbReference type="ChEBI" id="CHEBI:15378"/>
        <dbReference type="ChEBI" id="CHEBI:57540"/>
        <dbReference type="ChEBI" id="CHEBI:57945"/>
        <dbReference type="ChEBI" id="CHEBI:180903"/>
        <dbReference type="ChEBI" id="CHEBI:180913"/>
    </reaction>
</comment>
<comment type="catalytic activity">
    <reaction evidence="1">
        <text>propanal + NAD(+) + H2O = propanoate + NADH + 2 H(+)</text>
        <dbReference type="Rhea" id="RHEA:67256"/>
        <dbReference type="ChEBI" id="CHEBI:15377"/>
        <dbReference type="ChEBI" id="CHEBI:15378"/>
        <dbReference type="ChEBI" id="CHEBI:17153"/>
        <dbReference type="ChEBI" id="CHEBI:17272"/>
        <dbReference type="ChEBI" id="CHEBI:57540"/>
        <dbReference type="ChEBI" id="CHEBI:57945"/>
    </reaction>
</comment>
<comment type="catalytic activity">
    <reaction evidence="1">
        <text>butanal + NAD(+) + H2O = butanoate + NADH + 2 H(+)</text>
        <dbReference type="Rhea" id="RHEA:69088"/>
        <dbReference type="ChEBI" id="CHEBI:15377"/>
        <dbReference type="ChEBI" id="CHEBI:15378"/>
        <dbReference type="ChEBI" id="CHEBI:15743"/>
        <dbReference type="ChEBI" id="CHEBI:17968"/>
        <dbReference type="ChEBI" id="CHEBI:57540"/>
        <dbReference type="ChEBI" id="CHEBI:57945"/>
    </reaction>
</comment>
<comment type="catalytic activity">
    <reaction evidence="1">
        <text>pentanal + NAD(+) + H2O = pentanoate + NADH + 2 H(+)</text>
        <dbReference type="Rhea" id="RHEA:69092"/>
        <dbReference type="ChEBI" id="CHEBI:15377"/>
        <dbReference type="ChEBI" id="CHEBI:15378"/>
        <dbReference type="ChEBI" id="CHEBI:31011"/>
        <dbReference type="ChEBI" id="CHEBI:57540"/>
        <dbReference type="ChEBI" id="CHEBI:57945"/>
        <dbReference type="ChEBI" id="CHEBI:84069"/>
    </reaction>
</comment>
<comment type="catalytic activity">
    <reaction evidence="1">
        <text>hexanal + NAD(+) + H2O = hexanoate + NADH + 2 H(+)</text>
        <dbReference type="Rhea" id="RHEA:67276"/>
        <dbReference type="ChEBI" id="CHEBI:15377"/>
        <dbReference type="ChEBI" id="CHEBI:15378"/>
        <dbReference type="ChEBI" id="CHEBI:17120"/>
        <dbReference type="ChEBI" id="CHEBI:57540"/>
        <dbReference type="ChEBI" id="CHEBI:57945"/>
        <dbReference type="ChEBI" id="CHEBI:88528"/>
    </reaction>
</comment>
<comment type="pathway">
    <text evidence="1">Amine and polyamine biosynthesis; carnitine biosynthesis.</text>
</comment>
<comment type="subunit">
    <text evidence="1">Homotetramer.</text>
</comment>
<comment type="subcellular location">
    <subcellularLocation>
        <location evidence="3">Cytoplasm</location>
        <location evidence="3">Cytosol</location>
    </subcellularLocation>
    <subcellularLocation>
        <location evidence="1">Cytoplasm</location>
    </subcellularLocation>
</comment>
<comment type="alternative products">
    <event type="alternative initiation"/>
    <isoform>
        <id>Q9JLJ2-1</id>
        <name>1</name>
        <sequence type="displayed"/>
    </isoform>
    <isoform>
        <id>Q9JLJ2-2</id>
        <name>2</name>
        <sequence type="described" ref="VSP_061582"/>
    </isoform>
</comment>
<comment type="miscellaneous">
    <molecule>Isoform 2</molecule>
    <text evidence="6">Produced by alternative initiation. Contains a predicted signal peptide at positions 1-21.</text>
</comment>
<comment type="similarity">
    <text evidence="6">Belongs to the aldehyde dehydrogenase family.</text>
</comment>
<accession>Q9JLJ2</accession>
<accession>Q3U367</accession>
<keyword id="KW-0007">Acetylation</keyword>
<keyword id="KW-0024">Alternative initiation</keyword>
<keyword id="KW-0963">Cytoplasm</keyword>
<keyword id="KW-0903">Direct protein sequencing</keyword>
<keyword id="KW-0520">NAD</keyword>
<keyword id="KW-0560">Oxidoreductase</keyword>
<keyword id="KW-1185">Reference proteome</keyword>
<sequence length="494" mass="53515">MSTGTFVVSQPLNYRGGARVEPVDASGTEKAFEPATGRVIATFACSGEKEVNLAVENAKAAFKLWSKKSGLERCQVLLEAARIIKERKDEIATVETINNGKSIFEARLDVDTCWQCLEYYAGLAASMAGEHIQLPGGSFGYTRREPLGVCVGIGAWNYPFQIACWKSAPALACGNAMIFKPSPFTPVSALLLAEIYTKAGAPPGLFNVVQGGAATGQFLCHHREVAKISFTGSVPTGVKIMEMSAKGVKPITLELGGKSPLIIFSDCNMENAVKGALMANFLTQGQVCCNGTRVFVQKEIADKFINEVVKQTQKIKLGDPLLEDTRMGPLINAPHLERVLGFVKLAKEQGATVLCGGEVYVPEDPKLKHGYYMTPCILTNCRDDMTCVKEEIFGPVMSILTFGTEAEVLERANDTTFGLAAGVFTRDIQRAHRVAAELQAGTCYINNYNVSPVELPFGGYKKSGFGRENGRVTIEYYSQLKTVCVEMGDVESAF</sequence>
<reference key="1">
    <citation type="journal article" date="2000" name="J. Biol. Chem.">
        <title>Molecular and biochemical characterization of rat gamma-trimethylaminobutyraldehyde dehydrogenase and evidence for the involvement of human aldehyde dehydrogenase 9 in carnitine biosynthesis.</title>
        <authorList>
            <person name="Vaz F.M."/>
            <person name="Fouchier S.W."/>
            <person name="Ofman R."/>
            <person name="Sommer M."/>
            <person name="Wanders R.J.A."/>
        </authorList>
    </citation>
    <scope>NUCLEOTIDE SEQUENCE [MRNA]</scope>
    <source>
        <tissue>Liver</tissue>
    </source>
</reference>
<reference evidence="8" key="2">
    <citation type="journal article" date="2002" name="Nature">
        <title>Analysis of the mouse transcriptome based on functional annotation of 60,770 full-length cDNAs.</title>
        <authorList>
            <person name="Okazaki Y."/>
            <person name="Furuno M."/>
            <person name="Kasukawa T."/>
            <person name="Adachi J."/>
            <person name="Bono H."/>
            <person name="Kondo S."/>
            <person name="Nikaido I."/>
            <person name="Osato N."/>
            <person name="Saito R."/>
            <person name="Suzuki H."/>
            <person name="Yamanaka I."/>
            <person name="Kiyosawa H."/>
            <person name="Yagi K."/>
            <person name="Tomaru Y."/>
            <person name="Hasegawa Y."/>
            <person name="Nogami A."/>
            <person name="Schonbach C."/>
            <person name="Gojobori T."/>
            <person name="Baldarelli R."/>
            <person name="Hill D.P."/>
            <person name="Bult C."/>
            <person name="Hume D.A."/>
            <person name="Quackenbush J."/>
            <person name="Schriml L.M."/>
            <person name="Kanapin A."/>
            <person name="Matsuda H."/>
            <person name="Batalov S."/>
            <person name="Beisel K.W."/>
            <person name="Blake J.A."/>
            <person name="Bradt D."/>
            <person name="Brusic V."/>
            <person name="Chothia C."/>
            <person name="Corbani L.E."/>
            <person name="Cousins S."/>
            <person name="Dalla E."/>
            <person name="Dragani T.A."/>
            <person name="Fletcher C.F."/>
            <person name="Forrest A."/>
            <person name="Frazer K.S."/>
            <person name="Gaasterland T."/>
            <person name="Gariboldi M."/>
            <person name="Gissi C."/>
            <person name="Godzik A."/>
            <person name="Gough J."/>
            <person name="Grimmond S."/>
            <person name="Gustincich S."/>
            <person name="Hirokawa N."/>
            <person name="Jackson I.J."/>
            <person name="Jarvis E.D."/>
            <person name="Kanai A."/>
            <person name="Kawaji H."/>
            <person name="Kawasawa Y."/>
            <person name="Kedzierski R.M."/>
            <person name="King B.L."/>
            <person name="Konagaya A."/>
            <person name="Kurochkin I.V."/>
            <person name="Lee Y."/>
            <person name="Lenhard B."/>
            <person name="Lyons P.A."/>
            <person name="Maglott D.R."/>
            <person name="Maltais L."/>
            <person name="Marchionni L."/>
            <person name="McKenzie L."/>
            <person name="Miki H."/>
            <person name="Nagashima T."/>
            <person name="Numata K."/>
            <person name="Okido T."/>
            <person name="Pavan W.J."/>
            <person name="Pertea G."/>
            <person name="Pesole G."/>
            <person name="Petrovsky N."/>
            <person name="Pillai R."/>
            <person name="Pontius J.U."/>
            <person name="Qi D."/>
            <person name="Ramachandran S."/>
            <person name="Ravasi T."/>
            <person name="Reed J.C."/>
            <person name="Reed D.J."/>
            <person name="Reid J."/>
            <person name="Ring B.Z."/>
            <person name="Ringwald M."/>
            <person name="Sandelin A."/>
            <person name="Schneider C."/>
            <person name="Semple C.A."/>
            <person name="Setou M."/>
            <person name="Shimada K."/>
            <person name="Sultana R."/>
            <person name="Takenaka Y."/>
            <person name="Taylor M.S."/>
            <person name="Teasdale R.D."/>
            <person name="Tomita M."/>
            <person name="Verardo R."/>
            <person name="Wagner L."/>
            <person name="Wahlestedt C."/>
            <person name="Wang Y."/>
            <person name="Watanabe Y."/>
            <person name="Wells C."/>
            <person name="Wilming L.G."/>
            <person name="Wynshaw-Boris A."/>
            <person name="Yanagisawa M."/>
            <person name="Yang I."/>
            <person name="Yang L."/>
            <person name="Yuan Z."/>
            <person name="Zavolan M."/>
            <person name="Zhu Y."/>
            <person name="Zimmer A."/>
            <person name="Carninci P."/>
            <person name="Hayatsu N."/>
            <person name="Hirozane-Kishikawa T."/>
            <person name="Konno H."/>
            <person name="Nakamura M."/>
            <person name="Sakazume N."/>
            <person name="Sato K."/>
            <person name="Shiraki T."/>
            <person name="Waki K."/>
            <person name="Kawai J."/>
            <person name="Aizawa K."/>
            <person name="Arakawa T."/>
            <person name="Fukuda S."/>
            <person name="Hara A."/>
            <person name="Hashizume W."/>
            <person name="Imotani K."/>
            <person name="Ishii Y."/>
            <person name="Itoh M."/>
            <person name="Kagawa I."/>
            <person name="Miyazaki A."/>
            <person name="Sakai K."/>
            <person name="Sasaki D."/>
            <person name="Shibata K."/>
            <person name="Shinagawa A."/>
            <person name="Yasunishi A."/>
            <person name="Yoshino M."/>
            <person name="Waterston R."/>
            <person name="Lander E.S."/>
            <person name="Rogers J."/>
            <person name="Birney E."/>
            <person name="Hayashizaki Y."/>
        </authorList>
    </citation>
    <scope>NUCLEOTIDE SEQUENCE [MRNA] (ISOFORM 2)</scope>
    <source>
        <strain evidence="7">C57BL/6J</strain>
        <strain evidence="8">NOD</strain>
        <tissue evidence="9">Epididymis</tissue>
        <tissue evidence="7">Liver</tissue>
    </source>
</reference>
<reference evidence="11" key="3">
    <citation type="journal article" date="2009" name="PLoS Biol.">
        <title>Lineage-specific biology revealed by a finished genome assembly of the mouse.</title>
        <authorList>
            <person name="Church D.M."/>
            <person name="Goodstadt L."/>
            <person name="Hillier L.W."/>
            <person name="Zody M.C."/>
            <person name="Goldstein S."/>
            <person name="She X."/>
            <person name="Bult C.J."/>
            <person name="Agarwala R."/>
            <person name="Cherry J.L."/>
            <person name="DiCuccio M."/>
            <person name="Hlavina W."/>
            <person name="Kapustin Y."/>
            <person name="Meric P."/>
            <person name="Maglott D."/>
            <person name="Birtle Z."/>
            <person name="Marques A.C."/>
            <person name="Graves T."/>
            <person name="Zhou S."/>
            <person name="Teague B."/>
            <person name="Potamousis K."/>
            <person name="Churas C."/>
            <person name="Place M."/>
            <person name="Herschleb J."/>
            <person name="Runnheim R."/>
            <person name="Forrest D."/>
            <person name="Amos-Landgraf J."/>
            <person name="Schwartz D.C."/>
            <person name="Cheng Z."/>
            <person name="Lindblad-Toh K."/>
            <person name="Eichler E.E."/>
            <person name="Ponting C.P."/>
        </authorList>
    </citation>
    <scope>NUCLEOTIDE SEQUENCE [LARGE SCALE GENOMIC DNA]</scope>
    <source>
        <strain evidence="11">C57BL/6J</strain>
    </source>
</reference>
<reference key="4">
    <citation type="journal article" date="2004" name="Genome Res.">
        <title>The status, quality, and expansion of the NIH full-length cDNA project: the Mammalian Gene Collection (MGC).</title>
        <authorList>
            <consortium name="The MGC Project Team"/>
        </authorList>
    </citation>
    <scope>NUCLEOTIDE SEQUENCE [LARGE SCALE MRNA]</scope>
    <source>
        <strain>FVB/N</strain>
        <tissue>Mammary tumor</tissue>
    </source>
</reference>
<reference key="5">
    <citation type="submission" date="2009-01" db="UniProtKB">
        <authorList>
            <person name="Lubec G."/>
            <person name="Sunyer B."/>
            <person name="Chen W.-Q."/>
        </authorList>
    </citation>
    <scope>PROTEIN SEQUENCE OF 39-59; 74-82; 88-101; 228-239; 247-274; 317-338; 348-366; 412-426 AND 472-494</scope>
    <scope>IDENTIFICATION BY MASS SPECTROMETRY</scope>
    <source>
        <strain>OF1</strain>
        <tissue>Hippocampus</tissue>
    </source>
</reference>
<reference key="6">
    <citation type="journal article" date="2010" name="Cell">
        <title>A tissue-specific atlas of mouse protein phosphorylation and expression.</title>
        <authorList>
            <person name="Huttlin E.L."/>
            <person name="Jedrychowski M.P."/>
            <person name="Elias J.E."/>
            <person name="Goswami T."/>
            <person name="Rad R."/>
            <person name="Beausoleil S.A."/>
            <person name="Villen J."/>
            <person name="Haas W."/>
            <person name="Sowa M.E."/>
            <person name="Gygi S.P."/>
        </authorList>
    </citation>
    <scope>IDENTIFICATION BY MASS SPECTROMETRY [LARGE SCALE ANALYSIS]</scope>
    <source>
        <tissue>Brain</tissue>
        <tissue>Brown adipose tissue</tissue>
        <tissue>Heart</tissue>
        <tissue>Kidney</tissue>
        <tissue>Liver</tissue>
        <tissue>Lung</tissue>
        <tissue>Pancreas</tissue>
        <tissue>Spleen</tissue>
        <tissue>Testis</tissue>
    </source>
</reference>
<reference key="7">
    <citation type="journal article" date="2013" name="Mol. Cell">
        <title>SIRT5-mediated lysine desuccinylation impacts diverse metabolic pathways.</title>
        <authorList>
            <person name="Park J."/>
            <person name="Chen Y."/>
            <person name="Tishkoff D.X."/>
            <person name="Peng C."/>
            <person name="Tan M."/>
            <person name="Dai L."/>
            <person name="Xie Z."/>
            <person name="Zhang Y."/>
            <person name="Zwaans B.M."/>
            <person name="Skinner M.E."/>
            <person name="Lombard D.B."/>
            <person name="Zhao Y."/>
        </authorList>
    </citation>
    <scope>SUCCINYLATION [LARGE SCALE ANALYSIS] AT LYS-30; LYS-59 AND LYS-303</scope>
    <scope>IDENTIFICATION BY MASS SPECTROMETRY [LARGE SCALE ANALYSIS]</scope>
    <source>
        <tissue>Liver</tissue>
    </source>
</reference>
<reference key="8">
    <citation type="journal article" date="2013" name="Proc. Natl. Acad. Sci. U.S.A.">
        <title>Label-free quantitative proteomics of the lysine acetylome in mitochondria identifies substrates of SIRT3 in metabolic pathways.</title>
        <authorList>
            <person name="Rardin M.J."/>
            <person name="Newman J.C."/>
            <person name="Held J.M."/>
            <person name="Cusack M.P."/>
            <person name="Sorensen D.J."/>
            <person name="Li B."/>
            <person name="Schilling B."/>
            <person name="Mooney S.D."/>
            <person name="Kahn C.R."/>
            <person name="Verdin E."/>
            <person name="Gibson B.W."/>
        </authorList>
    </citation>
    <scope>ACETYLATION [LARGE SCALE ANALYSIS] AT LYS-30; LYS-298; LYS-303 AND LYS-344</scope>
    <scope>IDENTIFICATION BY MASS SPECTROMETRY [LARGE SCALE ANALYSIS]</scope>
    <source>
        <tissue>Liver</tissue>
    </source>
</reference>
<dbReference type="EC" id="1.2.1.47" evidence="1"/>
<dbReference type="EC" id="1.2.1.3" evidence="1"/>
<dbReference type="EC" id="1.2.1.46" evidence="1"/>
<dbReference type="EC" id="1.2.1.19" evidence="1"/>
<dbReference type="EMBL" id="AF170919">
    <property type="protein sequence ID" value="AAF43599.1"/>
    <property type="molecule type" value="mRNA"/>
</dbReference>
<dbReference type="EMBL" id="BC003297">
    <property type="protein sequence ID" value="AAH03297.1"/>
    <property type="molecule type" value="mRNA"/>
</dbReference>
<dbReference type="EMBL" id="AK149589">
    <property type="protein sequence ID" value="BAE28979.1"/>
    <property type="molecule type" value="mRNA"/>
</dbReference>
<dbReference type="EMBL" id="AK162354">
    <property type="protein sequence ID" value="BAE36870.1"/>
    <property type="molecule type" value="mRNA"/>
</dbReference>
<dbReference type="EMBL" id="AK154914">
    <property type="protein sequence ID" value="BAE32922.1"/>
    <property type="molecule type" value="mRNA"/>
</dbReference>
<dbReference type="CCDS" id="CCDS35765.1">
    <molecule id="Q9JLJ2-2"/>
</dbReference>
<dbReference type="RefSeq" id="NP_064377.2">
    <molecule id="Q9JLJ2-2"/>
    <property type="nucleotide sequence ID" value="NM_019993.4"/>
</dbReference>
<dbReference type="SMR" id="Q9JLJ2"/>
<dbReference type="BioGRID" id="208163">
    <property type="interactions" value="19"/>
</dbReference>
<dbReference type="FunCoup" id="Q9JLJ2">
    <property type="interactions" value="1677"/>
</dbReference>
<dbReference type="IntAct" id="Q9JLJ2">
    <property type="interactions" value="1"/>
</dbReference>
<dbReference type="MINT" id="Q9JLJ2"/>
<dbReference type="STRING" id="10090.ENSMUSP00000028004"/>
<dbReference type="GlyGen" id="Q9JLJ2">
    <property type="glycosylation" value="2 sites, 1 O-linked glycan (1 site)"/>
</dbReference>
<dbReference type="iPTMnet" id="Q9JLJ2"/>
<dbReference type="PhosphoSitePlus" id="Q9JLJ2"/>
<dbReference type="SwissPalm" id="Q9JLJ2"/>
<dbReference type="REPRODUCTION-2DPAGE" id="Q9JLJ2"/>
<dbReference type="jPOST" id="Q9JLJ2"/>
<dbReference type="PaxDb" id="10090-ENSMUSP00000028004"/>
<dbReference type="ProteomicsDB" id="282071"/>
<dbReference type="ProteomicsDB" id="331125"/>
<dbReference type="Pumba" id="Q9JLJ2"/>
<dbReference type="DNASU" id="56752"/>
<dbReference type="Ensembl" id="ENSMUST00000028004.11">
    <molecule id="Q9JLJ2-2"/>
    <property type="protein sequence ID" value="ENSMUSP00000028004.10"/>
    <property type="gene ID" value="ENSMUSG00000026687.15"/>
</dbReference>
<dbReference type="GeneID" id="56752"/>
<dbReference type="KEGG" id="mmu:56752"/>
<dbReference type="AGR" id="MGI:1861622"/>
<dbReference type="CTD" id="223"/>
<dbReference type="MGI" id="MGI:1861622">
    <property type="gene designation" value="Aldh9a1"/>
</dbReference>
<dbReference type="VEuPathDB" id="HostDB:ENSMUSG00000026687"/>
<dbReference type="eggNOG" id="KOG2450">
    <property type="taxonomic scope" value="Eukaryota"/>
</dbReference>
<dbReference type="GeneTree" id="ENSGT00940000162687"/>
<dbReference type="InParanoid" id="Q9JLJ2"/>
<dbReference type="OMA" id="CREGIRM"/>
<dbReference type="OrthoDB" id="6811at9989"/>
<dbReference type="PhylomeDB" id="Q9JLJ2"/>
<dbReference type="BRENDA" id="1.2.1.47">
    <property type="organism ID" value="3474"/>
</dbReference>
<dbReference type="Reactome" id="R-MMU-71262">
    <property type="pathway name" value="Carnitine synthesis"/>
</dbReference>
<dbReference type="UniPathway" id="UPA00118"/>
<dbReference type="BioGRID-ORCS" id="56752">
    <property type="hits" value="0 hits in 63 CRISPR screens"/>
</dbReference>
<dbReference type="ChiTaRS" id="Aldh9a1">
    <property type="organism name" value="mouse"/>
</dbReference>
<dbReference type="PRO" id="PR:Q9JLJ2"/>
<dbReference type="Proteomes" id="UP000000589">
    <property type="component" value="Chromosome 1"/>
</dbReference>
<dbReference type="RNAct" id="Q9JLJ2">
    <property type="molecule type" value="protein"/>
</dbReference>
<dbReference type="Bgee" id="ENSMUSG00000026687">
    <property type="expression patterns" value="Expressed in left lobe of liver and 280 other cell types or tissues"/>
</dbReference>
<dbReference type="GO" id="GO:0005829">
    <property type="term" value="C:cytosol"/>
    <property type="evidence" value="ECO:0000314"/>
    <property type="project" value="MGI"/>
</dbReference>
<dbReference type="GO" id="GO:0005739">
    <property type="term" value="C:mitochondrion"/>
    <property type="evidence" value="ECO:0007005"/>
    <property type="project" value="MGI"/>
</dbReference>
<dbReference type="GO" id="GO:0047105">
    <property type="term" value="F:4-trimethylammoniobutyraldehyde dehydrogenase activity"/>
    <property type="evidence" value="ECO:0000314"/>
    <property type="project" value="MGI"/>
</dbReference>
<dbReference type="GO" id="GO:0140087">
    <property type="term" value="F:acetaldehyde dehydrogenase (NAD+) activity"/>
    <property type="evidence" value="ECO:0007669"/>
    <property type="project" value="RHEA"/>
</dbReference>
<dbReference type="GO" id="GO:0004029">
    <property type="term" value="F:aldehyde dehydrogenase (NAD+) activity"/>
    <property type="evidence" value="ECO:0000250"/>
    <property type="project" value="UniProtKB"/>
</dbReference>
<dbReference type="GO" id="GO:0019145">
    <property type="term" value="F:aminobutyraldehyde dehydrogenase (NAD+) activity"/>
    <property type="evidence" value="ECO:0000250"/>
    <property type="project" value="UniProtKB"/>
</dbReference>
<dbReference type="GO" id="GO:0018467">
    <property type="term" value="F:formaldehyde dehydrogenase (NAD+) activity"/>
    <property type="evidence" value="ECO:0000250"/>
    <property type="project" value="UniProtKB"/>
</dbReference>
<dbReference type="GO" id="GO:0016620">
    <property type="term" value="F:oxidoreductase activity, acting on the aldehyde or oxo group of donors, NAD or NADP as acceptor"/>
    <property type="evidence" value="ECO:0000314"/>
    <property type="project" value="MGI"/>
</dbReference>
<dbReference type="GO" id="GO:0006081">
    <property type="term" value="P:aldehyde metabolic process"/>
    <property type="evidence" value="ECO:0000250"/>
    <property type="project" value="UniProtKB"/>
</dbReference>
<dbReference type="GO" id="GO:0045329">
    <property type="term" value="P:carnitine biosynthetic process"/>
    <property type="evidence" value="ECO:0000314"/>
    <property type="project" value="MGI"/>
</dbReference>
<dbReference type="GO" id="GO:0009437">
    <property type="term" value="P:carnitine metabolic process"/>
    <property type="evidence" value="ECO:0000314"/>
    <property type="project" value="MGI"/>
</dbReference>
<dbReference type="GO" id="GO:0051289">
    <property type="term" value="P:protein homotetramerization"/>
    <property type="evidence" value="ECO:0000250"/>
    <property type="project" value="UniProtKB"/>
</dbReference>
<dbReference type="CDD" id="cd07090">
    <property type="entry name" value="ALDH_F9_TMBADH"/>
    <property type="match status" value="1"/>
</dbReference>
<dbReference type="FunFam" id="3.40.309.10:FF:000019">
    <property type="entry name" value="4-trimethylaminobutyraldehyde dehydrogenase isoform X1"/>
    <property type="match status" value="1"/>
</dbReference>
<dbReference type="FunFam" id="3.40.605.10:FF:000016">
    <property type="entry name" value="4-trimethylaminobutyraldehyde dehydrogenase isoform X1"/>
    <property type="match status" value="1"/>
</dbReference>
<dbReference type="Gene3D" id="3.40.605.10">
    <property type="entry name" value="Aldehyde Dehydrogenase, Chain A, domain 1"/>
    <property type="match status" value="1"/>
</dbReference>
<dbReference type="Gene3D" id="3.40.309.10">
    <property type="entry name" value="Aldehyde Dehydrogenase, Chain A, domain 2"/>
    <property type="match status" value="1"/>
</dbReference>
<dbReference type="InterPro" id="IPR016161">
    <property type="entry name" value="Ald_DH/histidinol_DH"/>
</dbReference>
<dbReference type="InterPro" id="IPR016163">
    <property type="entry name" value="Ald_DH_C"/>
</dbReference>
<dbReference type="InterPro" id="IPR016160">
    <property type="entry name" value="Ald_DH_CS_CYS"/>
</dbReference>
<dbReference type="InterPro" id="IPR029510">
    <property type="entry name" value="Ald_DH_CS_GLU"/>
</dbReference>
<dbReference type="InterPro" id="IPR016162">
    <property type="entry name" value="Ald_DH_N"/>
</dbReference>
<dbReference type="InterPro" id="IPR015590">
    <property type="entry name" value="Aldehyde_DH_dom"/>
</dbReference>
<dbReference type="NCBIfam" id="NF009725">
    <property type="entry name" value="PRK13252.1"/>
    <property type="match status" value="1"/>
</dbReference>
<dbReference type="PANTHER" id="PTHR11699">
    <property type="entry name" value="ALDEHYDE DEHYDROGENASE-RELATED"/>
    <property type="match status" value="1"/>
</dbReference>
<dbReference type="Pfam" id="PF00171">
    <property type="entry name" value="Aldedh"/>
    <property type="match status" value="1"/>
</dbReference>
<dbReference type="SUPFAM" id="SSF53720">
    <property type="entry name" value="ALDH-like"/>
    <property type="match status" value="1"/>
</dbReference>
<dbReference type="PROSITE" id="PS00070">
    <property type="entry name" value="ALDEHYDE_DEHYDR_CYS"/>
    <property type="match status" value="1"/>
</dbReference>
<dbReference type="PROSITE" id="PS00687">
    <property type="entry name" value="ALDEHYDE_DEHYDR_GLU"/>
    <property type="match status" value="1"/>
</dbReference>